<dbReference type="EC" id="2.1.1.192" evidence="1"/>
<dbReference type="EMBL" id="CP001283">
    <property type="protein sequence ID" value="ACK88438.1"/>
    <property type="molecule type" value="Genomic_DNA"/>
</dbReference>
<dbReference type="RefSeq" id="WP_000450543.1">
    <property type="nucleotide sequence ID" value="NC_011773.1"/>
</dbReference>
<dbReference type="SMR" id="B7JJV1"/>
<dbReference type="GeneID" id="75087000"/>
<dbReference type="KEGG" id="bcu:BCAH820_3878"/>
<dbReference type="HOGENOM" id="CLU_029101_0_1_9"/>
<dbReference type="Proteomes" id="UP000001363">
    <property type="component" value="Chromosome"/>
</dbReference>
<dbReference type="GO" id="GO:0005737">
    <property type="term" value="C:cytoplasm"/>
    <property type="evidence" value="ECO:0007669"/>
    <property type="project" value="UniProtKB-SubCell"/>
</dbReference>
<dbReference type="GO" id="GO:0051539">
    <property type="term" value="F:4 iron, 4 sulfur cluster binding"/>
    <property type="evidence" value="ECO:0007669"/>
    <property type="project" value="UniProtKB-UniRule"/>
</dbReference>
<dbReference type="GO" id="GO:0046872">
    <property type="term" value="F:metal ion binding"/>
    <property type="evidence" value="ECO:0007669"/>
    <property type="project" value="UniProtKB-KW"/>
</dbReference>
<dbReference type="GO" id="GO:0070040">
    <property type="term" value="F:rRNA (adenine(2503)-C2-)-methyltransferase activity"/>
    <property type="evidence" value="ECO:0007669"/>
    <property type="project" value="UniProtKB-UniRule"/>
</dbReference>
<dbReference type="GO" id="GO:0019843">
    <property type="term" value="F:rRNA binding"/>
    <property type="evidence" value="ECO:0007669"/>
    <property type="project" value="UniProtKB-UniRule"/>
</dbReference>
<dbReference type="GO" id="GO:0002935">
    <property type="term" value="F:tRNA (adenine(37)-C2)-methyltransferase activity"/>
    <property type="evidence" value="ECO:0007669"/>
    <property type="project" value="UniProtKB-UniRule"/>
</dbReference>
<dbReference type="GO" id="GO:0000049">
    <property type="term" value="F:tRNA binding"/>
    <property type="evidence" value="ECO:0007669"/>
    <property type="project" value="UniProtKB-UniRule"/>
</dbReference>
<dbReference type="GO" id="GO:0070475">
    <property type="term" value="P:rRNA base methylation"/>
    <property type="evidence" value="ECO:0007669"/>
    <property type="project" value="UniProtKB-UniRule"/>
</dbReference>
<dbReference type="GO" id="GO:0030488">
    <property type="term" value="P:tRNA methylation"/>
    <property type="evidence" value="ECO:0007669"/>
    <property type="project" value="UniProtKB-UniRule"/>
</dbReference>
<dbReference type="CDD" id="cd01335">
    <property type="entry name" value="Radical_SAM"/>
    <property type="match status" value="1"/>
</dbReference>
<dbReference type="FunFam" id="1.10.150.530:FF:000002">
    <property type="entry name" value="Probable dual-specificity RNA methyltransferase RlmN"/>
    <property type="match status" value="1"/>
</dbReference>
<dbReference type="FunFam" id="3.20.20.70:FF:000014">
    <property type="entry name" value="Probable dual-specificity RNA methyltransferase RlmN"/>
    <property type="match status" value="1"/>
</dbReference>
<dbReference type="Gene3D" id="1.10.150.530">
    <property type="match status" value="1"/>
</dbReference>
<dbReference type="Gene3D" id="3.20.20.70">
    <property type="entry name" value="Aldolase class I"/>
    <property type="match status" value="1"/>
</dbReference>
<dbReference type="HAMAP" id="MF_01849">
    <property type="entry name" value="RNA_methyltr_RlmN"/>
    <property type="match status" value="1"/>
</dbReference>
<dbReference type="InterPro" id="IPR013785">
    <property type="entry name" value="Aldolase_TIM"/>
</dbReference>
<dbReference type="InterPro" id="IPR040072">
    <property type="entry name" value="Methyltransferase_A"/>
</dbReference>
<dbReference type="InterPro" id="IPR048641">
    <property type="entry name" value="RlmN_N"/>
</dbReference>
<dbReference type="InterPro" id="IPR027492">
    <property type="entry name" value="RNA_MTrfase_RlmN"/>
</dbReference>
<dbReference type="InterPro" id="IPR004383">
    <property type="entry name" value="rRNA_lsu_MTrfase_RlmN/Cfr"/>
</dbReference>
<dbReference type="InterPro" id="IPR007197">
    <property type="entry name" value="rSAM"/>
</dbReference>
<dbReference type="NCBIfam" id="TIGR00048">
    <property type="entry name" value="rRNA_mod_RlmN"/>
    <property type="match status" value="1"/>
</dbReference>
<dbReference type="PANTHER" id="PTHR30544">
    <property type="entry name" value="23S RRNA METHYLTRANSFERASE"/>
    <property type="match status" value="1"/>
</dbReference>
<dbReference type="PANTHER" id="PTHR30544:SF5">
    <property type="entry name" value="RADICAL SAM CORE DOMAIN-CONTAINING PROTEIN"/>
    <property type="match status" value="1"/>
</dbReference>
<dbReference type="Pfam" id="PF04055">
    <property type="entry name" value="Radical_SAM"/>
    <property type="match status" value="1"/>
</dbReference>
<dbReference type="Pfam" id="PF21016">
    <property type="entry name" value="RlmN_N"/>
    <property type="match status" value="1"/>
</dbReference>
<dbReference type="PIRSF" id="PIRSF006004">
    <property type="entry name" value="CHP00048"/>
    <property type="match status" value="1"/>
</dbReference>
<dbReference type="SFLD" id="SFLDF00275">
    <property type="entry name" value="adenosine_C2_methyltransferase"/>
    <property type="match status" value="1"/>
</dbReference>
<dbReference type="SFLD" id="SFLDS00029">
    <property type="entry name" value="Radical_SAM"/>
    <property type="match status" value="1"/>
</dbReference>
<dbReference type="SUPFAM" id="SSF102114">
    <property type="entry name" value="Radical SAM enzymes"/>
    <property type="match status" value="1"/>
</dbReference>
<dbReference type="PROSITE" id="PS51918">
    <property type="entry name" value="RADICAL_SAM"/>
    <property type="match status" value="1"/>
</dbReference>
<feature type="chain" id="PRO_1000188547" description="Probable dual-specificity RNA methyltransferase RlmN">
    <location>
        <begin position="1"/>
        <end position="362"/>
    </location>
</feature>
<feature type="domain" description="Radical SAM core" evidence="2">
    <location>
        <begin position="111"/>
        <end position="344"/>
    </location>
</feature>
<feature type="active site" description="Proton acceptor" evidence="1">
    <location>
        <position position="105"/>
    </location>
</feature>
<feature type="active site" description="S-methylcysteine intermediate" evidence="1">
    <location>
        <position position="349"/>
    </location>
</feature>
<feature type="binding site" evidence="1">
    <location>
        <position position="125"/>
    </location>
    <ligand>
        <name>[4Fe-4S] cluster</name>
        <dbReference type="ChEBI" id="CHEBI:49883"/>
        <note>4Fe-4S-S-AdoMet</note>
    </ligand>
</feature>
<feature type="binding site" evidence="1">
    <location>
        <position position="129"/>
    </location>
    <ligand>
        <name>[4Fe-4S] cluster</name>
        <dbReference type="ChEBI" id="CHEBI:49883"/>
        <note>4Fe-4S-S-AdoMet</note>
    </ligand>
</feature>
<feature type="binding site" evidence="1">
    <location>
        <position position="132"/>
    </location>
    <ligand>
        <name>[4Fe-4S] cluster</name>
        <dbReference type="ChEBI" id="CHEBI:49883"/>
        <note>4Fe-4S-S-AdoMet</note>
    </ligand>
</feature>
<feature type="binding site" evidence="1">
    <location>
        <begin position="175"/>
        <end position="176"/>
    </location>
    <ligand>
        <name>S-adenosyl-L-methionine</name>
        <dbReference type="ChEBI" id="CHEBI:59789"/>
    </ligand>
</feature>
<feature type="binding site" evidence="1">
    <location>
        <position position="207"/>
    </location>
    <ligand>
        <name>S-adenosyl-L-methionine</name>
        <dbReference type="ChEBI" id="CHEBI:59789"/>
    </ligand>
</feature>
<feature type="binding site" evidence="1">
    <location>
        <begin position="230"/>
        <end position="232"/>
    </location>
    <ligand>
        <name>S-adenosyl-L-methionine</name>
        <dbReference type="ChEBI" id="CHEBI:59789"/>
    </ligand>
</feature>
<feature type="binding site" evidence="1">
    <location>
        <position position="306"/>
    </location>
    <ligand>
        <name>S-adenosyl-L-methionine</name>
        <dbReference type="ChEBI" id="CHEBI:59789"/>
    </ligand>
</feature>
<feature type="disulfide bond" description="(transient)" evidence="1">
    <location>
        <begin position="118"/>
        <end position="349"/>
    </location>
</feature>
<gene>
    <name evidence="1" type="primary">rlmN</name>
    <name type="ordered locus">BCAH820_3878</name>
</gene>
<protein>
    <recommendedName>
        <fullName evidence="1">Probable dual-specificity RNA methyltransferase RlmN</fullName>
        <ecNumber evidence="1">2.1.1.192</ecNumber>
    </recommendedName>
    <alternativeName>
        <fullName evidence="1">23S rRNA (adenine(2503)-C(2))-methyltransferase</fullName>
    </alternativeName>
    <alternativeName>
        <fullName evidence="1">23S rRNA m2A2503 methyltransferase</fullName>
    </alternativeName>
    <alternativeName>
        <fullName evidence="1">Ribosomal RNA large subunit methyltransferase N</fullName>
    </alternativeName>
    <alternativeName>
        <fullName evidence="1">tRNA (adenine(37)-C(2))-methyltransferase</fullName>
    </alternativeName>
    <alternativeName>
        <fullName evidence="1">tRNA m2A37 methyltransferase</fullName>
    </alternativeName>
</protein>
<name>RLMN_BACC0</name>
<proteinExistence type="inferred from homology"/>
<reference key="1">
    <citation type="submission" date="2008-10" db="EMBL/GenBank/DDBJ databases">
        <title>Genome sequence of Bacillus cereus AH820.</title>
        <authorList>
            <person name="Dodson R.J."/>
            <person name="Durkin A.S."/>
            <person name="Rosovitz M.J."/>
            <person name="Rasko D.A."/>
            <person name="Hoffmaster A."/>
            <person name="Ravel J."/>
            <person name="Sutton G."/>
        </authorList>
    </citation>
    <scope>NUCLEOTIDE SEQUENCE [LARGE SCALE GENOMIC DNA]</scope>
    <source>
        <strain>AH820</strain>
    </source>
</reference>
<organism>
    <name type="scientific">Bacillus cereus (strain AH820)</name>
    <dbReference type="NCBI Taxonomy" id="405535"/>
    <lineage>
        <taxon>Bacteria</taxon>
        <taxon>Bacillati</taxon>
        <taxon>Bacillota</taxon>
        <taxon>Bacilli</taxon>
        <taxon>Bacillales</taxon>
        <taxon>Bacillaceae</taxon>
        <taxon>Bacillus</taxon>
        <taxon>Bacillus cereus group</taxon>
    </lineage>
</organism>
<keyword id="KW-0004">4Fe-4S</keyword>
<keyword id="KW-0963">Cytoplasm</keyword>
<keyword id="KW-1015">Disulfide bond</keyword>
<keyword id="KW-0408">Iron</keyword>
<keyword id="KW-0411">Iron-sulfur</keyword>
<keyword id="KW-0479">Metal-binding</keyword>
<keyword id="KW-0489">Methyltransferase</keyword>
<keyword id="KW-0698">rRNA processing</keyword>
<keyword id="KW-0949">S-adenosyl-L-methionine</keyword>
<keyword id="KW-0808">Transferase</keyword>
<keyword id="KW-0819">tRNA processing</keyword>
<accession>B7JJV1</accession>
<comment type="function">
    <text evidence="1">Specifically methylates position 2 of adenine 2503 in 23S rRNA and position 2 of adenine 37 in tRNAs.</text>
</comment>
<comment type="catalytic activity">
    <reaction evidence="1">
        <text>adenosine(2503) in 23S rRNA + 2 reduced [2Fe-2S]-[ferredoxin] + 2 S-adenosyl-L-methionine = 2-methyladenosine(2503) in 23S rRNA + 5'-deoxyadenosine + L-methionine + 2 oxidized [2Fe-2S]-[ferredoxin] + S-adenosyl-L-homocysteine</text>
        <dbReference type="Rhea" id="RHEA:42916"/>
        <dbReference type="Rhea" id="RHEA-COMP:10000"/>
        <dbReference type="Rhea" id="RHEA-COMP:10001"/>
        <dbReference type="Rhea" id="RHEA-COMP:10152"/>
        <dbReference type="Rhea" id="RHEA-COMP:10282"/>
        <dbReference type="ChEBI" id="CHEBI:17319"/>
        <dbReference type="ChEBI" id="CHEBI:33737"/>
        <dbReference type="ChEBI" id="CHEBI:33738"/>
        <dbReference type="ChEBI" id="CHEBI:57844"/>
        <dbReference type="ChEBI" id="CHEBI:57856"/>
        <dbReference type="ChEBI" id="CHEBI:59789"/>
        <dbReference type="ChEBI" id="CHEBI:74411"/>
        <dbReference type="ChEBI" id="CHEBI:74497"/>
        <dbReference type="EC" id="2.1.1.192"/>
    </reaction>
</comment>
<comment type="catalytic activity">
    <reaction evidence="1">
        <text>adenosine(37) in tRNA + 2 reduced [2Fe-2S]-[ferredoxin] + 2 S-adenosyl-L-methionine = 2-methyladenosine(37) in tRNA + 5'-deoxyadenosine + L-methionine + 2 oxidized [2Fe-2S]-[ferredoxin] + S-adenosyl-L-homocysteine</text>
        <dbReference type="Rhea" id="RHEA:43332"/>
        <dbReference type="Rhea" id="RHEA-COMP:10000"/>
        <dbReference type="Rhea" id="RHEA-COMP:10001"/>
        <dbReference type="Rhea" id="RHEA-COMP:10162"/>
        <dbReference type="Rhea" id="RHEA-COMP:10485"/>
        <dbReference type="ChEBI" id="CHEBI:17319"/>
        <dbReference type="ChEBI" id="CHEBI:33737"/>
        <dbReference type="ChEBI" id="CHEBI:33738"/>
        <dbReference type="ChEBI" id="CHEBI:57844"/>
        <dbReference type="ChEBI" id="CHEBI:57856"/>
        <dbReference type="ChEBI" id="CHEBI:59789"/>
        <dbReference type="ChEBI" id="CHEBI:74411"/>
        <dbReference type="ChEBI" id="CHEBI:74497"/>
        <dbReference type="EC" id="2.1.1.192"/>
    </reaction>
</comment>
<comment type="cofactor">
    <cofactor evidence="1">
        <name>[4Fe-4S] cluster</name>
        <dbReference type="ChEBI" id="CHEBI:49883"/>
    </cofactor>
    <text evidence="1">Binds 1 [4Fe-4S] cluster. The cluster is coordinated with 3 cysteines and an exchangeable S-adenosyl-L-methionine.</text>
</comment>
<comment type="subcellular location">
    <subcellularLocation>
        <location evidence="1">Cytoplasm</location>
    </subcellularLocation>
</comment>
<comment type="miscellaneous">
    <text evidence="1">Reaction proceeds by a ping-pong mechanism involving intermediate methylation of a conserved cysteine residue.</text>
</comment>
<comment type="similarity">
    <text evidence="1">Belongs to the radical SAM superfamily. RlmN family.</text>
</comment>
<evidence type="ECO:0000255" key="1">
    <source>
        <dbReference type="HAMAP-Rule" id="MF_01849"/>
    </source>
</evidence>
<evidence type="ECO:0000255" key="2">
    <source>
        <dbReference type="PROSITE-ProRule" id="PRU01266"/>
    </source>
</evidence>
<sequence>METTVRKQKKNLETKKPSIYSLQLHEMQDWLKEQGEPKFRAGQIFDWLYKKRVKNYEDMSNLSKGLREKLSNSFDITTLNTLVKQTSSDGTIKFLFQLYDGYSIETVLMRHEYGNSICVTTQVGCRIGCTFCASTLGGLKRNLEAGEIVAQVVEVQRALDESEERVSSLVVMGIGEPFDNYDNLMGFLRIINHEKGLHIGARHMTVSTSGIIPKIYKFAEEDLQINFAISLHAPNSELRSKLMPINRAYKLPDLMEAIKYYVNRTGRRITFEYGLFGGENDQVEHAEELAALLKGVKCHVNLIPVNYVPERDYVRTPREQIFLFEKTLKDRGVNVTIRREQGHDIDAACGQLRAKERKEETR</sequence>